<reference key="1">
    <citation type="journal article" date="2003" name="Mol. Microbiol.">
        <title>Genome-based analysis of virulence genes in a non-biofilm-forming Staphylococcus epidermidis strain (ATCC 12228).</title>
        <authorList>
            <person name="Zhang Y.-Q."/>
            <person name="Ren S.-X."/>
            <person name="Li H.-L."/>
            <person name="Wang Y.-X."/>
            <person name="Fu G."/>
            <person name="Yang J."/>
            <person name="Qin Z.-Q."/>
            <person name="Miao Y.-G."/>
            <person name="Wang W.-Y."/>
            <person name="Chen R.-S."/>
            <person name="Shen Y."/>
            <person name="Chen Z."/>
            <person name="Yuan Z.-H."/>
            <person name="Zhao G.-P."/>
            <person name="Qu D."/>
            <person name="Danchin A."/>
            <person name="Wen Y.-M."/>
        </authorList>
    </citation>
    <scope>NUCLEOTIDE SEQUENCE [LARGE SCALE GENOMIC DNA]</scope>
    <source>
        <strain>ATCC 12228 / FDA PCI 1200</strain>
    </source>
</reference>
<keyword id="KW-0131">Cell cycle</keyword>
<keyword id="KW-0132">Cell division</keyword>
<keyword id="KW-0963">Cytoplasm</keyword>
<keyword id="KW-0342">GTP-binding</keyword>
<keyword id="KW-0547">Nucleotide-binding</keyword>
<keyword id="KW-0717">Septation</keyword>
<comment type="function">
    <text evidence="1">Essential cell division protein that forms a contractile ring structure (Z ring) at the future cell division site. The regulation of the ring assembly controls the timing and the location of cell division. One of the functions of the FtsZ ring is to recruit other cell division proteins to the septum to produce a new cell wall between the dividing cells. Binds GTP and shows GTPase activity.</text>
</comment>
<comment type="subunit">
    <text evidence="1">Homodimer. Polymerizes to form a dynamic ring structure in a strictly GTP-dependent manner. Interacts directly with several other division proteins.</text>
</comment>
<comment type="subcellular location">
    <subcellularLocation>
        <location evidence="1">Cytoplasm</location>
    </subcellularLocation>
    <text evidence="1">Assembles at midcell at the inner surface of the cytoplasmic membrane.</text>
</comment>
<comment type="similarity">
    <text evidence="1">Belongs to the FtsZ family.</text>
</comment>
<gene>
    <name evidence="1" type="primary">ftsZ</name>
    <name type="ordered locus">SE_0861</name>
</gene>
<sequence length="394" mass="41438">MLEFEQGFNHLATLKVIGVGGGGNNAVNRMIDHGMNNVEFIAINTDGQALNLSKAESKIQIGEKLTRGLGAGANPEIGKKAAEESREQIEDAIQGADMVFVTAGMGGGTGTGAAPVVAKIAKEMGALTVGVVTRPFGFEGRKRQTQAAAGVESMKAAVDTLIVIPNDRLLDIVDKSTPMMEAFKEADNVLRQGVQGISDLIAVSGEVNLDFADVKTIMSNQGSALMGIGVSSGENRAVEAAKKAISSPLLETSIVGAQGVLMNITGGESLSLFEAQEAADIVQDAADEDVNMIFGTVINPELQDEIVVTVIATGFEDKPSSQGRKATSTGFGSSVNSSSNHQSGASAKEDSFSAHTSHSQSSESVNERSHTTKDDDIPSFIRNREERRSRRTRR</sequence>
<proteinExistence type="inferred from homology"/>
<accession>Q8CPK4</accession>
<dbReference type="EMBL" id="AE015929">
    <property type="protein sequence ID" value="AAO04458.1"/>
    <property type="molecule type" value="Genomic_DNA"/>
</dbReference>
<dbReference type="RefSeq" id="NP_764416.1">
    <property type="nucleotide sequence ID" value="NC_004461.1"/>
</dbReference>
<dbReference type="RefSeq" id="WP_001830170.1">
    <property type="nucleotide sequence ID" value="NZ_WBME01000036.1"/>
</dbReference>
<dbReference type="SMR" id="Q8CPK4"/>
<dbReference type="GeneID" id="50019000"/>
<dbReference type="KEGG" id="sep:SE_0861"/>
<dbReference type="PATRIC" id="fig|176280.10.peg.834"/>
<dbReference type="eggNOG" id="COG0206">
    <property type="taxonomic scope" value="Bacteria"/>
</dbReference>
<dbReference type="HOGENOM" id="CLU_024865_0_1_9"/>
<dbReference type="OrthoDB" id="9813375at2"/>
<dbReference type="Proteomes" id="UP000001411">
    <property type="component" value="Chromosome"/>
</dbReference>
<dbReference type="GO" id="GO:0032153">
    <property type="term" value="C:cell division site"/>
    <property type="evidence" value="ECO:0007669"/>
    <property type="project" value="UniProtKB-UniRule"/>
</dbReference>
<dbReference type="GO" id="GO:0005737">
    <property type="term" value="C:cytoplasm"/>
    <property type="evidence" value="ECO:0007669"/>
    <property type="project" value="UniProtKB-SubCell"/>
</dbReference>
<dbReference type="GO" id="GO:0005525">
    <property type="term" value="F:GTP binding"/>
    <property type="evidence" value="ECO:0007669"/>
    <property type="project" value="UniProtKB-UniRule"/>
</dbReference>
<dbReference type="GO" id="GO:0003924">
    <property type="term" value="F:GTPase activity"/>
    <property type="evidence" value="ECO:0007669"/>
    <property type="project" value="UniProtKB-UniRule"/>
</dbReference>
<dbReference type="GO" id="GO:0000917">
    <property type="term" value="P:division septum assembly"/>
    <property type="evidence" value="ECO:0007669"/>
    <property type="project" value="UniProtKB-KW"/>
</dbReference>
<dbReference type="GO" id="GO:0043093">
    <property type="term" value="P:FtsZ-dependent cytokinesis"/>
    <property type="evidence" value="ECO:0007669"/>
    <property type="project" value="UniProtKB-UniRule"/>
</dbReference>
<dbReference type="GO" id="GO:0051258">
    <property type="term" value="P:protein polymerization"/>
    <property type="evidence" value="ECO:0007669"/>
    <property type="project" value="UniProtKB-UniRule"/>
</dbReference>
<dbReference type="CDD" id="cd02201">
    <property type="entry name" value="FtsZ_type1"/>
    <property type="match status" value="1"/>
</dbReference>
<dbReference type="FunFam" id="3.30.1330.20:FF:000005">
    <property type="entry name" value="Cell division protein FtsZ"/>
    <property type="match status" value="1"/>
</dbReference>
<dbReference type="FunFam" id="3.40.50.1440:FF:000023">
    <property type="entry name" value="Cell division protein FtsZ"/>
    <property type="match status" value="1"/>
</dbReference>
<dbReference type="Gene3D" id="3.30.1330.20">
    <property type="entry name" value="Tubulin/FtsZ, C-terminal domain"/>
    <property type="match status" value="1"/>
</dbReference>
<dbReference type="Gene3D" id="3.40.50.1440">
    <property type="entry name" value="Tubulin/FtsZ, GTPase domain"/>
    <property type="match status" value="1"/>
</dbReference>
<dbReference type="HAMAP" id="MF_00909">
    <property type="entry name" value="FtsZ"/>
    <property type="match status" value="1"/>
</dbReference>
<dbReference type="InterPro" id="IPR000158">
    <property type="entry name" value="Cell_div_FtsZ"/>
</dbReference>
<dbReference type="InterPro" id="IPR020805">
    <property type="entry name" value="Cell_div_FtsZ_CS"/>
</dbReference>
<dbReference type="InterPro" id="IPR045061">
    <property type="entry name" value="FtsZ/CetZ"/>
</dbReference>
<dbReference type="InterPro" id="IPR024757">
    <property type="entry name" value="FtsZ_C"/>
</dbReference>
<dbReference type="InterPro" id="IPR008280">
    <property type="entry name" value="Tub_FtsZ_C"/>
</dbReference>
<dbReference type="InterPro" id="IPR037103">
    <property type="entry name" value="Tubulin/FtsZ-like_C"/>
</dbReference>
<dbReference type="InterPro" id="IPR018316">
    <property type="entry name" value="Tubulin/FtsZ_2-layer-sand-dom"/>
</dbReference>
<dbReference type="InterPro" id="IPR036525">
    <property type="entry name" value="Tubulin/FtsZ_GTPase_sf"/>
</dbReference>
<dbReference type="InterPro" id="IPR003008">
    <property type="entry name" value="Tubulin_FtsZ_GTPase"/>
</dbReference>
<dbReference type="NCBIfam" id="TIGR00065">
    <property type="entry name" value="ftsZ"/>
    <property type="match status" value="1"/>
</dbReference>
<dbReference type="PANTHER" id="PTHR30314">
    <property type="entry name" value="CELL DIVISION PROTEIN FTSZ-RELATED"/>
    <property type="match status" value="1"/>
</dbReference>
<dbReference type="PANTHER" id="PTHR30314:SF3">
    <property type="entry name" value="MITOCHONDRIAL DIVISION PROTEIN FSZA"/>
    <property type="match status" value="1"/>
</dbReference>
<dbReference type="Pfam" id="PF12327">
    <property type="entry name" value="FtsZ_C"/>
    <property type="match status" value="1"/>
</dbReference>
<dbReference type="Pfam" id="PF00091">
    <property type="entry name" value="Tubulin"/>
    <property type="match status" value="1"/>
</dbReference>
<dbReference type="PRINTS" id="PR00423">
    <property type="entry name" value="CELLDVISFTSZ"/>
</dbReference>
<dbReference type="SMART" id="SM00864">
    <property type="entry name" value="Tubulin"/>
    <property type="match status" value="1"/>
</dbReference>
<dbReference type="SMART" id="SM00865">
    <property type="entry name" value="Tubulin_C"/>
    <property type="match status" value="1"/>
</dbReference>
<dbReference type="SUPFAM" id="SSF55307">
    <property type="entry name" value="Tubulin C-terminal domain-like"/>
    <property type="match status" value="1"/>
</dbReference>
<dbReference type="SUPFAM" id="SSF52490">
    <property type="entry name" value="Tubulin nucleotide-binding domain-like"/>
    <property type="match status" value="1"/>
</dbReference>
<dbReference type="PROSITE" id="PS01134">
    <property type="entry name" value="FTSZ_1"/>
    <property type="match status" value="1"/>
</dbReference>
<dbReference type="PROSITE" id="PS01135">
    <property type="entry name" value="FTSZ_2"/>
    <property type="match status" value="1"/>
</dbReference>
<protein>
    <recommendedName>
        <fullName evidence="1">Cell division protein FtsZ</fullName>
    </recommendedName>
</protein>
<name>FTSZ_STAES</name>
<organism>
    <name type="scientific">Staphylococcus epidermidis (strain ATCC 12228 / FDA PCI 1200)</name>
    <dbReference type="NCBI Taxonomy" id="176280"/>
    <lineage>
        <taxon>Bacteria</taxon>
        <taxon>Bacillati</taxon>
        <taxon>Bacillota</taxon>
        <taxon>Bacilli</taxon>
        <taxon>Bacillales</taxon>
        <taxon>Staphylococcaceae</taxon>
        <taxon>Staphylococcus</taxon>
    </lineage>
</organism>
<feature type="chain" id="PRO_0000114386" description="Cell division protein FtsZ">
    <location>
        <begin position="1"/>
        <end position="394"/>
    </location>
</feature>
<feature type="region of interest" description="Disordered" evidence="2">
    <location>
        <begin position="317"/>
        <end position="394"/>
    </location>
</feature>
<feature type="compositionally biased region" description="Low complexity" evidence="2">
    <location>
        <begin position="328"/>
        <end position="346"/>
    </location>
</feature>
<feature type="compositionally biased region" description="Low complexity" evidence="2">
    <location>
        <begin position="353"/>
        <end position="364"/>
    </location>
</feature>
<feature type="compositionally biased region" description="Basic and acidic residues" evidence="2">
    <location>
        <begin position="365"/>
        <end position="388"/>
    </location>
</feature>
<feature type="binding site" evidence="1">
    <location>
        <begin position="21"/>
        <end position="25"/>
    </location>
    <ligand>
        <name>GTP</name>
        <dbReference type="ChEBI" id="CHEBI:37565"/>
    </ligand>
</feature>
<feature type="binding site" evidence="1">
    <location>
        <begin position="108"/>
        <end position="110"/>
    </location>
    <ligand>
        <name>GTP</name>
        <dbReference type="ChEBI" id="CHEBI:37565"/>
    </ligand>
</feature>
<feature type="binding site" evidence="1">
    <location>
        <position position="139"/>
    </location>
    <ligand>
        <name>GTP</name>
        <dbReference type="ChEBI" id="CHEBI:37565"/>
    </ligand>
</feature>
<feature type="binding site" evidence="1">
    <location>
        <position position="143"/>
    </location>
    <ligand>
        <name>GTP</name>
        <dbReference type="ChEBI" id="CHEBI:37565"/>
    </ligand>
</feature>
<feature type="binding site" evidence="1">
    <location>
        <position position="187"/>
    </location>
    <ligand>
        <name>GTP</name>
        <dbReference type="ChEBI" id="CHEBI:37565"/>
    </ligand>
</feature>
<evidence type="ECO:0000255" key="1">
    <source>
        <dbReference type="HAMAP-Rule" id="MF_00909"/>
    </source>
</evidence>
<evidence type="ECO:0000256" key="2">
    <source>
        <dbReference type="SAM" id="MobiDB-lite"/>
    </source>
</evidence>